<name>ARCA_STRS7</name>
<gene>
    <name evidence="1" type="primary">arcA</name>
    <name type="ordered locus">SZO_14240</name>
</gene>
<feature type="chain" id="PRO_1000204478" description="Arginine deiminase">
    <location>
        <begin position="1"/>
        <end position="411"/>
    </location>
</feature>
<feature type="active site" description="Amidino-cysteine intermediate" evidence="1">
    <location>
        <position position="401"/>
    </location>
</feature>
<keyword id="KW-0056">Arginine metabolism</keyword>
<keyword id="KW-0963">Cytoplasm</keyword>
<keyword id="KW-0378">Hydrolase</keyword>
<dbReference type="EC" id="3.5.3.6" evidence="1"/>
<dbReference type="EMBL" id="FM204884">
    <property type="protein sequence ID" value="CAX00031.1"/>
    <property type="molecule type" value="Genomic_DNA"/>
</dbReference>
<dbReference type="SMR" id="C0MD79"/>
<dbReference type="KEGG" id="seq:SZO_14240"/>
<dbReference type="eggNOG" id="COG2235">
    <property type="taxonomic scope" value="Bacteria"/>
</dbReference>
<dbReference type="HOGENOM" id="CLU_052662_0_1_9"/>
<dbReference type="UniPathway" id="UPA00254">
    <property type="reaction ID" value="UER00364"/>
</dbReference>
<dbReference type="Proteomes" id="UP000001368">
    <property type="component" value="Chromosome"/>
</dbReference>
<dbReference type="GO" id="GO:0005737">
    <property type="term" value="C:cytoplasm"/>
    <property type="evidence" value="ECO:0007669"/>
    <property type="project" value="UniProtKB-SubCell"/>
</dbReference>
<dbReference type="GO" id="GO:0016990">
    <property type="term" value="F:arginine deiminase activity"/>
    <property type="evidence" value="ECO:0007669"/>
    <property type="project" value="UniProtKB-UniRule"/>
</dbReference>
<dbReference type="GO" id="GO:0019547">
    <property type="term" value="P:arginine catabolic process to ornithine"/>
    <property type="evidence" value="ECO:0007669"/>
    <property type="project" value="UniProtKB-UniRule"/>
</dbReference>
<dbReference type="GO" id="GO:0019546">
    <property type="term" value="P:arginine deiminase pathway"/>
    <property type="evidence" value="ECO:0007669"/>
    <property type="project" value="TreeGrafter"/>
</dbReference>
<dbReference type="Gene3D" id="1.10.3930.10">
    <property type="entry name" value="Arginine deiminase"/>
    <property type="match status" value="1"/>
</dbReference>
<dbReference type="Gene3D" id="3.75.10.10">
    <property type="entry name" value="L-arginine/glycine Amidinotransferase, Chain A"/>
    <property type="match status" value="1"/>
</dbReference>
<dbReference type="HAMAP" id="MF_00242">
    <property type="entry name" value="Arg_deiminase"/>
    <property type="match status" value="1"/>
</dbReference>
<dbReference type="InterPro" id="IPR003876">
    <property type="entry name" value="Arg_deiminase"/>
</dbReference>
<dbReference type="NCBIfam" id="TIGR01078">
    <property type="entry name" value="arcA"/>
    <property type="match status" value="1"/>
</dbReference>
<dbReference type="NCBIfam" id="NF002381">
    <property type="entry name" value="PRK01388.1"/>
    <property type="match status" value="1"/>
</dbReference>
<dbReference type="PANTHER" id="PTHR47271">
    <property type="entry name" value="ARGININE DEIMINASE"/>
    <property type="match status" value="1"/>
</dbReference>
<dbReference type="PANTHER" id="PTHR47271:SF2">
    <property type="entry name" value="ARGININE DEIMINASE"/>
    <property type="match status" value="1"/>
</dbReference>
<dbReference type="Pfam" id="PF02274">
    <property type="entry name" value="ADI"/>
    <property type="match status" value="1"/>
</dbReference>
<dbReference type="PIRSF" id="PIRSF006356">
    <property type="entry name" value="Arg_deiminase"/>
    <property type="match status" value="1"/>
</dbReference>
<dbReference type="PRINTS" id="PR01466">
    <property type="entry name" value="ARGDEIMINASE"/>
</dbReference>
<dbReference type="SUPFAM" id="SSF55909">
    <property type="entry name" value="Pentein"/>
    <property type="match status" value="1"/>
</dbReference>
<comment type="catalytic activity">
    <reaction evidence="1">
        <text>L-arginine + H2O = L-citrulline + NH4(+)</text>
        <dbReference type="Rhea" id="RHEA:19597"/>
        <dbReference type="ChEBI" id="CHEBI:15377"/>
        <dbReference type="ChEBI" id="CHEBI:28938"/>
        <dbReference type="ChEBI" id="CHEBI:32682"/>
        <dbReference type="ChEBI" id="CHEBI:57743"/>
        <dbReference type="EC" id="3.5.3.6"/>
    </reaction>
</comment>
<comment type="pathway">
    <text evidence="1">Amino-acid degradation; L-arginine degradation via ADI pathway; carbamoyl phosphate from L-arginine: step 1/2.</text>
</comment>
<comment type="subcellular location">
    <subcellularLocation>
        <location evidence="1">Cytoplasm</location>
    </subcellularLocation>
</comment>
<comment type="similarity">
    <text evidence="1">Belongs to the arginine deiminase family.</text>
</comment>
<sequence>MTAQTPIHVYSEIGKLKKVLLHRPGKEIENLMPDYLERLLFDDIPFLEDAQKEHDAFAQALRDEGVEVLYLETLAAESLVTPEIREAFIDEYLSEANIRGRATKKAIRELLMSIEDNQELIEKTMAGVQKSELPEIPAAEKGLTDLVESSYPFAIDPMPNLYFTRDPFATIGTGVSLNHMFSETRNRETIYGKYIFTHHPIYGGGKVPMVYDRNETTRIEGGDELVLSKDVLAVGISQRTDAASIEKLLVNIFKQKLGFKKVLAFEFANNRKFMHLDTVFTMVDYDKFTIHPEIEGDLRVYSVTYENEELRIVEETGDLAELLAANLGVEHVELIRCGGDNLVAAGREQWNDGSNTLTIAPGVVVVYNRNTITNAILESKGLKLIKIHGSELVRGRGGPRCMSMPFEREDI</sequence>
<proteinExistence type="inferred from homology"/>
<evidence type="ECO:0000255" key="1">
    <source>
        <dbReference type="HAMAP-Rule" id="MF_00242"/>
    </source>
</evidence>
<reference key="1">
    <citation type="journal article" date="2009" name="PLoS Pathog.">
        <title>Genomic evidence for the evolution of Streptococcus equi: host restriction, increased virulence, and genetic exchange with human pathogens.</title>
        <authorList>
            <person name="Holden M.T.G."/>
            <person name="Heather Z."/>
            <person name="Paillot R."/>
            <person name="Steward K.F."/>
            <person name="Webb K."/>
            <person name="Ainslie F."/>
            <person name="Jourdan T."/>
            <person name="Bason N.C."/>
            <person name="Holroyd N.E."/>
            <person name="Mungall K."/>
            <person name="Quail M.A."/>
            <person name="Sanders M."/>
            <person name="Simmonds M."/>
            <person name="Willey D."/>
            <person name="Brooks K."/>
            <person name="Aanensen D.M."/>
            <person name="Spratt B.G."/>
            <person name="Jolley K.A."/>
            <person name="Maiden M.C.J."/>
            <person name="Kehoe M."/>
            <person name="Chanter N."/>
            <person name="Bentley S.D."/>
            <person name="Robinson C."/>
            <person name="Maskell D.J."/>
            <person name="Parkhill J."/>
            <person name="Waller A.S."/>
        </authorList>
    </citation>
    <scope>NUCLEOTIDE SEQUENCE [LARGE SCALE GENOMIC DNA]</scope>
    <source>
        <strain>H70</strain>
    </source>
</reference>
<protein>
    <recommendedName>
        <fullName evidence="1">Arginine deiminase</fullName>
        <shortName evidence="1">ADI</shortName>
        <ecNumber evidence="1">3.5.3.6</ecNumber>
    </recommendedName>
    <alternativeName>
        <fullName evidence="1">Arginine dihydrolase</fullName>
        <shortName evidence="1">AD</shortName>
    </alternativeName>
</protein>
<organism>
    <name type="scientific">Streptococcus equi subsp. zooepidemicus (strain H70)</name>
    <dbReference type="NCBI Taxonomy" id="553483"/>
    <lineage>
        <taxon>Bacteria</taxon>
        <taxon>Bacillati</taxon>
        <taxon>Bacillota</taxon>
        <taxon>Bacilli</taxon>
        <taxon>Lactobacillales</taxon>
        <taxon>Streptococcaceae</taxon>
        <taxon>Streptococcus</taxon>
    </lineage>
</organism>
<accession>C0MD79</accession>